<evidence type="ECO:0000250" key="1"/>
<evidence type="ECO:0000250" key="2">
    <source>
        <dbReference type="UniProtKB" id="Q9Y4F3"/>
    </source>
</evidence>
<evidence type="ECO:0000255" key="3">
    <source>
        <dbReference type="PROSITE-ProRule" id="PRU00176"/>
    </source>
</evidence>
<evidence type="ECO:0000255" key="4">
    <source>
        <dbReference type="PROSITE-ProRule" id="PRU00975"/>
    </source>
</evidence>
<evidence type="ECO:0000256" key="5">
    <source>
        <dbReference type="SAM" id="MobiDB-lite"/>
    </source>
</evidence>
<evidence type="ECO:0000269" key="6">
    <source>
    </source>
</evidence>
<evidence type="ECO:0000269" key="7">
    <source>
    </source>
</evidence>
<evidence type="ECO:0000303" key="8">
    <source>
    </source>
</evidence>
<evidence type="ECO:0000303" key="9">
    <source>
    </source>
</evidence>
<evidence type="ECO:0000303" key="10">
    <source ref="4"/>
</evidence>
<evidence type="ECO:0000305" key="11"/>
<evidence type="ECO:0000312" key="12">
    <source>
        <dbReference type="MGI" id="MGI:2444505"/>
    </source>
</evidence>
<evidence type="ECO:0007744" key="13">
    <source>
    </source>
</evidence>
<evidence type="ECO:0007744" key="14">
    <source>
    </source>
</evidence>
<evidence type="ECO:0007829" key="15">
    <source>
        <dbReference type="PDB" id="5YAA"/>
    </source>
</evidence>
<evidence type="ECO:0007829" key="16">
    <source>
        <dbReference type="PDB" id="5YAD"/>
    </source>
</evidence>
<keyword id="KW-0002">3D-structure</keyword>
<keyword id="KW-0025">Alternative splicing</keyword>
<keyword id="KW-0221">Differentiation</keyword>
<keyword id="KW-0469">Meiosis</keyword>
<keyword id="KW-0896">Oogenesis</keyword>
<keyword id="KW-0576">Peroxisome</keyword>
<keyword id="KW-0597">Phosphoprotein</keyword>
<keyword id="KW-1185">Reference proteome</keyword>
<keyword id="KW-0677">Repeat</keyword>
<keyword id="KW-0694">RNA-binding</keyword>
<accession>Q8BJ34</accession>
<accession>E9QPE4</accession>
<accession>Q5DU29</accession>
<accession>Q8C6U4</accession>
<accession>Q8K2E6</accession>
<organism>
    <name type="scientific">Mus musculus</name>
    <name type="common">Mouse</name>
    <dbReference type="NCBI Taxonomy" id="10090"/>
    <lineage>
        <taxon>Eukaryota</taxon>
        <taxon>Metazoa</taxon>
        <taxon>Chordata</taxon>
        <taxon>Craniata</taxon>
        <taxon>Vertebrata</taxon>
        <taxon>Euteleostomi</taxon>
        <taxon>Mammalia</taxon>
        <taxon>Eutheria</taxon>
        <taxon>Euarchontoglires</taxon>
        <taxon>Glires</taxon>
        <taxon>Rodentia</taxon>
        <taxon>Myomorpha</taxon>
        <taxon>Muroidea</taxon>
        <taxon>Muridae</taxon>
        <taxon>Murinae</taxon>
        <taxon>Mus</taxon>
        <taxon>Mus</taxon>
    </lineage>
</organism>
<protein>
    <recommendedName>
        <fullName evidence="2">Meiosis regulator and mRNA stability factor 1</fullName>
    </recommendedName>
    <alternativeName>
        <fullName>Limkain-b1</fullName>
    </alternativeName>
    <alternativeName>
        <fullName evidence="12">Meiosis arrest female protein 1</fullName>
    </alternativeName>
</protein>
<reference key="1">
    <citation type="journal article" date="2005" name="Science">
        <title>The transcriptional landscape of the mammalian genome.</title>
        <authorList>
            <person name="Carninci P."/>
            <person name="Kasukawa T."/>
            <person name="Katayama S."/>
            <person name="Gough J."/>
            <person name="Frith M.C."/>
            <person name="Maeda N."/>
            <person name="Oyama R."/>
            <person name="Ravasi T."/>
            <person name="Lenhard B."/>
            <person name="Wells C."/>
            <person name="Kodzius R."/>
            <person name="Shimokawa K."/>
            <person name="Bajic V.B."/>
            <person name="Brenner S.E."/>
            <person name="Batalov S."/>
            <person name="Forrest A.R."/>
            <person name="Zavolan M."/>
            <person name="Davis M.J."/>
            <person name="Wilming L.G."/>
            <person name="Aidinis V."/>
            <person name="Allen J.E."/>
            <person name="Ambesi-Impiombato A."/>
            <person name="Apweiler R."/>
            <person name="Aturaliya R.N."/>
            <person name="Bailey T.L."/>
            <person name="Bansal M."/>
            <person name="Baxter L."/>
            <person name="Beisel K.W."/>
            <person name="Bersano T."/>
            <person name="Bono H."/>
            <person name="Chalk A.M."/>
            <person name="Chiu K.P."/>
            <person name="Choudhary V."/>
            <person name="Christoffels A."/>
            <person name="Clutterbuck D.R."/>
            <person name="Crowe M.L."/>
            <person name="Dalla E."/>
            <person name="Dalrymple B.P."/>
            <person name="de Bono B."/>
            <person name="Della Gatta G."/>
            <person name="di Bernardo D."/>
            <person name="Down T."/>
            <person name="Engstrom P."/>
            <person name="Fagiolini M."/>
            <person name="Faulkner G."/>
            <person name="Fletcher C.F."/>
            <person name="Fukushima T."/>
            <person name="Furuno M."/>
            <person name="Futaki S."/>
            <person name="Gariboldi M."/>
            <person name="Georgii-Hemming P."/>
            <person name="Gingeras T.R."/>
            <person name="Gojobori T."/>
            <person name="Green R.E."/>
            <person name="Gustincich S."/>
            <person name="Harbers M."/>
            <person name="Hayashi Y."/>
            <person name="Hensch T.K."/>
            <person name="Hirokawa N."/>
            <person name="Hill D."/>
            <person name="Huminiecki L."/>
            <person name="Iacono M."/>
            <person name="Ikeo K."/>
            <person name="Iwama A."/>
            <person name="Ishikawa T."/>
            <person name="Jakt M."/>
            <person name="Kanapin A."/>
            <person name="Katoh M."/>
            <person name="Kawasawa Y."/>
            <person name="Kelso J."/>
            <person name="Kitamura H."/>
            <person name="Kitano H."/>
            <person name="Kollias G."/>
            <person name="Krishnan S.P."/>
            <person name="Kruger A."/>
            <person name="Kummerfeld S.K."/>
            <person name="Kurochkin I.V."/>
            <person name="Lareau L.F."/>
            <person name="Lazarevic D."/>
            <person name="Lipovich L."/>
            <person name="Liu J."/>
            <person name="Liuni S."/>
            <person name="McWilliam S."/>
            <person name="Madan Babu M."/>
            <person name="Madera M."/>
            <person name="Marchionni L."/>
            <person name="Matsuda H."/>
            <person name="Matsuzawa S."/>
            <person name="Miki H."/>
            <person name="Mignone F."/>
            <person name="Miyake S."/>
            <person name="Morris K."/>
            <person name="Mottagui-Tabar S."/>
            <person name="Mulder N."/>
            <person name="Nakano N."/>
            <person name="Nakauchi H."/>
            <person name="Ng P."/>
            <person name="Nilsson R."/>
            <person name="Nishiguchi S."/>
            <person name="Nishikawa S."/>
            <person name="Nori F."/>
            <person name="Ohara O."/>
            <person name="Okazaki Y."/>
            <person name="Orlando V."/>
            <person name="Pang K.C."/>
            <person name="Pavan W.J."/>
            <person name="Pavesi G."/>
            <person name="Pesole G."/>
            <person name="Petrovsky N."/>
            <person name="Piazza S."/>
            <person name="Reed J."/>
            <person name="Reid J.F."/>
            <person name="Ring B.Z."/>
            <person name="Ringwald M."/>
            <person name="Rost B."/>
            <person name="Ruan Y."/>
            <person name="Salzberg S.L."/>
            <person name="Sandelin A."/>
            <person name="Schneider C."/>
            <person name="Schoenbach C."/>
            <person name="Sekiguchi K."/>
            <person name="Semple C.A."/>
            <person name="Seno S."/>
            <person name="Sessa L."/>
            <person name="Sheng Y."/>
            <person name="Shibata Y."/>
            <person name="Shimada H."/>
            <person name="Shimada K."/>
            <person name="Silva D."/>
            <person name="Sinclair B."/>
            <person name="Sperling S."/>
            <person name="Stupka E."/>
            <person name="Sugiura K."/>
            <person name="Sultana R."/>
            <person name="Takenaka Y."/>
            <person name="Taki K."/>
            <person name="Tammoja K."/>
            <person name="Tan S.L."/>
            <person name="Tang S."/>
            <person name="Taylor M.S."/>
            <person name="Tegner J."/>
            <person name="Teichmann S.A."/>
            <person name="Ueda H.R."/>
            <person name="van Nimwegen E."/>
            <person name="Verardo R."/>
            <person name="Wei C.L."/>
            <person name="Yagi K."/>
            <person name="Yamanishi H."/>
            <person name="Zabarovsky E."/>
            <person name="Zhu S."/>
            <person name="Zimmer A."/>
            <person name="Hide W."/>
            <person name="Bult C."/>
            <person name="Grimmond S.M."/>
            <person name="Teasdale R.D."/>
            <person name="Liu E.T."/>
            <person name="Brusic V."/>
            <person name="Quackenbush J."/>
            <person name="Wahlestedt C."/>
            <person name="Mattick J.S."/>
            <person name="Hume D.A."/>
            <person name="Kai C."/>
            <person name="Sasaki D."/>
            <person name="Tomaru Y."/>
            <person name="Fukuda S."/>
            <person name="Kanamori-Katayama M."/>
            <person name="Suzuki M."/>
            <person name="Aoki J."/>
            <person name="Arakawa T."/>
            <person name="Iida J."/>
            <person name="Imamura K."/>
            <person name="Itoh M."/>
            <person name="Kato T."/>
            <person name="Kawaji H."/>
            <person name="Kawagashira N."/>
            <person name="Kawashima T."/>
            <person name="Kojima M."/>
            <person name="Kondo S."/>
            <person name="Konno H."/>
            <person name="Nakano K."/>
            <person name="Ninomiya N."/>
            <person name="Nishio T."/>
            <person name="Okada M."/>
            <person name="Plessy C."/>
            <person name="Shibata K."/>
            <person name="Shiraki T."/>
            <person name="Suzuki S."/>
            <person name="Tagami M."/>
            <person name="Waki K."/>
            <person name="Watahiki A."/>
            <person name="Okamura-Oho Y."/>
            <person name="Suzuki H."/>
            <person name="Kawai J."/>
            <person name="Hayashizaki Y."/>
        </authorList>
    </citation>
    <scope>NUCLEOTIDE SEQUENCE [LARGE SCALE MRNA] (ISOFORM 2)</scope>
    <scope>NUCLEOTIDE SEQUENCE [LARGE SCALE MRNA] OF 1357-1730 (ISOFORM 4)</scope>
    <source>
        <strain>C57BL/6J</strain>
        <tissue>Lung</tissue>
        <tissue>Urinary bladder</tissue>
    </source>
</reference>
<reference key="2">
    <citation type="journal article" date="2009" name="PLoS Biol.">
        <title>Lineage-specific biology revealed by a finished genome assembly of the mouse.</title>
        <authorList>
            <person name="Church D.M."/>
            <person name="Goodstadt L."/>
            <person name="Hillier L.W."/>
            <person name="Zody M.C."/>
            <person name="Goldstein S."/>
            <person name="She X."/>
            <person name="Bult C.J."/>
            <person name="Agarwala R."/>
            <person name="Cherry J.L."/>
            <person name="DiCuccio M."/>
            <person name="Hlavina W."/>
            <person name="Kapustin Y."/>
            <person name="Meric P."/>
            <person name="Maglott D."/>
            <person name="Birtle Z."/>
            <person name="Marques A.C."/>
            <person name="Graves T."/>
            <person name="Zhou S."/>
            <person name="Teague B."/>
            <person name="Potamousis K."/>
            <person name="Churas C."/>
            <person name="Place M."/>
            <person name="Herschleb J."/>
            <person name="Runnheim R."/>
            <person name="Forrest D."/>
            <person name="Amos-Landgraf J."/>
            <person name="Schwartz D.C."/>
            <person name="Cheng Z."/>
            <person name="Lindblad-Toh K."/>
            <person name="Eichler E.E."/>
            <person name="Ponting C.P."/>
        </authorList>
    </citation>
    <scope>NUCLEOTIDE SEQUENCE [LARGE SCALE GENOMIC DNA]</scope>
    <source>
        <strain>C57BL/6J</strain>
    </source>
</reference>
<reference key="3">
    <citation type="journal article" date="2004" name="Genome Res.">
        <title>The status, quality, and expansion of the NIH full-length cDNA project: the Mammalian Gene Collection (MGC).</title>
        <authorList>
            <consortium name="The MGC Project Team"/>
        </authorList>
    </citation>
    <scope>NUCLEOTIDE SEQUENCE [LARGE SCALE MRNA] (ISOFORM 5)</scope>
    <source>
        <strain>FVB/N</strain>
        <tissue>Mammary tumor</tissue>
    </source>
</reference>
<reference key="4">
    <citation type="submission" date="2005-02" db="EMBL/GenBank/DDBJ databases">
        <title>Prediction of the coding sequences of mouse homologues of KIAA gene. The complete nucleotide sequences of mouse KIAA-homologous cDNAs identified by screening of terminal sequences of cDNA clones randomly sampled from size-fractionated libraries.</title>
        <authorList>
            <person name="Okazaki N."/>
            <person name="Kikuno R.F."/>
            <person name="Ohara R."/>
            <person name="Inamoto S."/>
            <person name="Nagase T."/>
            <person name="Ohara O."/>
            <person name="Koga H."/>
        </authorList>
    </citation>
    <scope>NUCLEOTIDE SEQUENCE [LARGE SCALE MRNA] OF 1-756 (ISOFORM 3)</scope>
    <source>
        <tissue>Brain</tissue>
    </source>
</reference>
<reference key="5">
    <citation type="submission" date="2006-03" db="EMBL/GenBank/DDBJ databases">
        <authorList>
            <person name="Okazaki N."/>
            <person name="Kikuno R.F."/>
            <person name="Nagase T."/>
            <person name="Ohara O."/>
            <person name="Koga H."/>
        </authorList>
    </citation>
    <scope>SEQUENCE REVISION</scope>
</reference>
<reference key="6">
    <citation type="journal article" date="2007" name="J. Immunol.">
        <title>Quantitative time-resolved phosphoproteomic analysis of mast cell signaling.</title>
        <authorList>
            <person name="Cao L."/>
            <person name="Yu K."/>
            <person name="Banh C."/>
            <person name="Nguyen V."/>
            <person name="Ritz A."/>
            <person name="Raphael B.J."/>
            <person name="Kawakami Y."/>
            <person name="Kawakami T."/>
            <person name="Salomon A.R."/>
        </authorList>
    </citation>
    <scope>PHOSPHORYLATION [LARGE SCALE ANALYSIS] AT TYR-698</scope>
    <scope>IDENTIFICATION BY MASS SPECTROMETRY [LARGE SCALE ANALYSIS]</scope>
    <source>
        <tissue>Mast cell</tissue>
    </source>
</reference>
<reference key="7">
    <citation type="journal article" date="2010" name="Cell">
        <title>A tissue-specific atlas of mouse protein phosphorylation and expression.</title>
        <authorList>
            <person name="Huttlin E.L."/>
            <person name="Jedrychowski M.P."/>
            <person name="Elias J.E."/>
            <person name="Goswami T."/>
            <person name="Rad R."/>
            <person name="Beausoleil S.A."/>
            <person name="Villen J."/>
            <person name="Haas W."/>
            <person name="Sowa M.E."/>
            <person name="Gygi S.P."/>
        </authorList>
    </citation>
    <scope>PHOSPHORYLATION [LARGE SCALE ANALYSIS] AT SER-1083 AND SER-1684</scope>
    <scope>IDENTIFICATION BY MASS SPECTROMETRY [LARGE SCALE ANALYSIS]</scope>
    <source>
        <tissue>Kidney</tissue>
        <tissue>Pancreas</tissue>
        <tissue>Spleen</tissue>
        <tissue>Testis</tissue>
    </source>
</reference>
<reference key="8">
    <citation type="journal article" date="2012" name="Science">
        <title>MARF1 regulates essential oogenic processes in mice.</title>
        <authorList>
            <person name="Su Y.Q."/>
            <person name="Sugiura K."/>
            <person name="Sun F."/>
            <person name="Pendola J.K."/>
            <person name="Cox G.A."/>
            <person name="Handel M.A."/>
            <person name="Schimenti J.C."/>
            <person name="Eppig J.J."/>
        </authorList>
    </citation>
    <scope>FUNCTION</scope>
    <scope>DISRUPTION PHENOTYPE</scope>
    <scope>TISSUE SPECIFICITY</scope>
</reference>
<reference key="9">
    <citation type="journal article" date="2012" name="Proc. Natl. Acad. Sci. U.S.A.">
        <title>Meiosis arrest female 1 (MARF1) has nuage-like function in mammalian oocytes.</title>
        <authorList>
            <person name="Su Y.Q."/>
            <person name="Sun F."/>
            <person name="Handel M.A."/>
            <person name="Schimenti J.C."/>
            <person name="Eppig J.J."/>
        </authorList>
    </citation>
    <scope>FUNCTION</scope>
    <scope>DISRUPTION PHENOTYPE</scope>
    <scope>DEVELOPMENTAL STAGE</scope>
</reference>
<proteinExistence type="evidence at protein level"/>
<gene>
    <name type="primary">Marf1</name>
    <name type="synonym">Kiaa0430</name>
    <name type="synonym">Lkap</name>
</gene>
<comment type="function">
    <text evidence="6 7">Essential regulator of oogenesis required for female meiotic progression to repress transposable elements and preventing their mobilization, which is essential for the germline integrity. Probably acts via some RNA metabolic process, equivalent to the piRNA system in males, which mediates the repression of transposable elements during meiosis by forming complexes composed of RNAs and governs the methylation and subsequent repression of transposons. Also required to protect from DNA double-strand breaks.</text>
</comment>
<comment type="subunit">
    <text evidence="1">Interacts with LIMK2.</text>
</comment>
<comment type="subcellular location">
    <subcellularLocation>
        <location evidence="1">Peroxisome</location>
    </subcellularLocation>
</comment>
<comment type="alternative products">
    <event type="alternative splicing"/>
    <isoform>
        <id>Q8BJ34-1</id>
        <name>1</name>
        <sequence type="displayed"/>
    </isoform>
    <isoform>
        <id>Q8BJ34-2</id>
        <name>2</name>
        <sequence type="described" ref="VSP_022992 VSP_022993 VSP_022997 VSP_022999"/>
    </isoform>
    <isoform>
        <id>Q8BJ34-3</id>
        <name>3</name>
        <sequence type="described" ref="VSP_022992 VSP_022994 VSP_022995 VSP_022996 VSP_022997"/>
    </isoform>
    <isoform>
        <id>Q8BJ34-4</id>
        <name>4</name>
        <sequence type="described" ref="VSP_023002"/>
    </isoform>
    <isoform>
        <id>Q8BJ34-5</id>
        <name>5</name>
        <sequence type="described" ref="VSP_022991 VSP_022998 VSP_023000 VSP_023001"/>
    </isoform>
    <isoform>
        <id>Q8BJ34-6</id>
        <name>6</name>
        <sequence type="described" ref="VSP_022997 VSP_022998 VSP_023002"/>
    </isoform>
</comment>
<comment type="tissue specificity">
    <text evidence="6">Predominantly present in oocytes and barely detectable in granulosa cells (at protein level).</text>
</comment>
<comment type="developmental stage">
    <text evidence="7">Detected in germ cells in quiescent oocytes isolated from newborn P0 ovaries that have not yet commenced the growth phase. Protein levels increase after oocytes initiate growth, and follicular development reach the primary follicle stage at P6. Thereafter, protein levels remain at the similar levels (at protein level).</text>
</comment>
<comment type="disruption phenotype">
    <text evidence="6 7">Female infertility due to oocyte meiotic arrest at the germinal vesicle stage: ovaries look normal, but oocytes do not resume meiosis even after a superovulatory regimen of gonadotropins and are ovulated at the immature germinal vesicle stage. Oocytes display strong up-regulation of a transcripts, increased retrotransposon expression, defective cytoplasmic maturation, and meiotic arrest. Mutant males are fertile.</text>
</comment>
<comment type="sequence caution" evidence="11">
    <conflict type="erroneous initiation">
        <sequence resource="EMBL-CDS" id="BAD90407"/>
    </conflict>
    <text>Extended N-terminus.</text>
</comment>
<dbReference type="EMBL" id="AK035704">
    <property type="protein sequence ID" value="BAC29160.1"/>
    <property type="molecule type" value="mRNA"/>
</dbReference>
<dbReference type="EMBL" id="AK053159">
    <property type="protein sequence ID" value="BAC35289.1"/>
    <property type="molecule type" value="mRNA"/>
</dbReference>
<dbReference type="EMBL" id="AC119853">
    <property type="status" value="NOT_ANNOTATED_CDS"/>
    <property type="molecule type" value="Genomic_DNA"/>
</dbReference>
<dbReference type="EMBL" id="AC164291">
    <property type="status" value="NOT_ANNOTATED_CDS"/>
    <property type="molecule type" value="Genomic_DNA"/>
</dbReference>
<dbReference type="EMBL" id="BC031575">
    <property type="protein sequence ID" value="AAH31575.1"/>
    <property type="molecule type" value="mRNA"/>
</dbReference>
<dbReference type="EMBL" id="AK220341">
    <property type="protein sequence ID" value="BAD90407.2"/>
    <property type="status" value="ALT_INIT"/>
    <property type="molecule type" value="Transcribed_RNA"/>
</dbReference>
<dbReference type="CCDS" id="CCDS37262.1">
    <molecule id="Q8BJ34-6"/>
</dbReference>
<dbReference type="RefSeq" id="NP_001074623.1">
    <molecule id="Q8BJ34-6"/>
    <property type="nucleotide sequence ID" value="NM_001081154.2"/>
</dbReference>
<dbReference type="PDB" id="5YAA">
    <property type="method" value="X-ray"/>
    <property type="resolution" value="1.75 A"/>
    <property type="chains" value="A/B/C/D=337-499"/>
</dbReference>
<dbReference type="PDB" id="5YAD">
    <property type="method" value="X-ray"/>
    <property type="resolution" value="1.76 A"/>
    <property type="chains" value="A/B=858-932"/>
</dbReference>
<dbReference type="PDBsum" id="5YAA"/>
<dbReference type="PDBsum" id="5YAD"/>
<dbReference type="SMR" id="Q8BJ34"/>
<dbReference type="BioGRID" id="230221">
    <property type="interactions" value="1"/>
</dbReference>
<dbReference type="FunCoup" id="Q8BJ34">
    <property type="interactions" value="4675"/>
</dbReference>
<dbReference type="STRING" id="10090.ENSMUSP00000087770"/>
<dbReference type="GlyGen" id="Q8BJ34">
    <property type="glycosylation" value="2 sites, 1 O-linked glycan (1 site)"/>
</dbReference>
<dbReference type="iPTMnet" id="Q8BJ34"/>
<dbReference type="PhosphoSitePlus" id="Q8BJ34"/>
<dbReference type="SwissPalm" id="Q8BJ34"/>
<dbReference type="jPOST" id="Q8BJ34"/>
<dbReference type="PaxDb" id="10090-ENSMUSP00000087770"/>
<dbReference type="PeptideAtlas" id="Q8BJ34"/>
<dbReference type="ProteomicsDB" id="295784">
    <molecule id="Q8BJ34-1"/>
</dbReference>
<dbReference type="ProteomicsDB" id="295785">
    <molecule id="Q8BJ34-2"/>
</dbReference>
<dbReference type="ProteomicsDB" id="295786">
    <molecule id="Q8BJ34-3"/>
</dbReference>
<dbReference type="ProteomicsDB" id="295787">
    <molecule id="Q8BJ34-4"/>
</dbReference>
<dbReference type="ProteomicsDB" id="295788">
    <molecule id="Q8BJ34-5"/>
</dbReference>
<dbReference type="ProteomicsDB" id="295789">
    <molecule id="Q8BJ34-6"/>
</dbReference>
<dbReference type="Pumba" id="Q8BJ34"/>
<dbReference type="Antibodypedia" id="3042">
    <property type="antibodies" value="31 antibodies from 13 providers"/>
</dbReference>
<dbReference type="Ensembl" id="ENSMUST00000090300.6">
    <molecule id="Q8BJ34-6"/>
    <property type="protein sequence ID" value="ENSMUSP00000087770.5"/>
    <property type="gene ID" value="ENSMUSG00000060657.9"/>
</dbReference>
<dbReference type="GeneID" id="223989"/>
<dbReference type="KEGG" id="mmu:223989"/>
<dbReference type="UCSC" id="uc007ygv.2">
    <molecule id="Q8BJ34-6"/>
    <property type="organism name" value="mouse"/>
</dbReference>
<dbReference type="UCSC" id="uc007ygw.2">
    <molecule id="Q8BJ34-5"/>
    <property type="organism name" value="mouse"/>
</dbReference>
<dbReference type="UCSC" id="uc007ygx.1">
    <molecule id="Q8BJ34-2"/>
    <property type="organism name" value="mouse"/>
</dbReference>
<dbReference type="AGR" id="MGI:2444505"/>
<dbReference type="CTD" id="9665"/>
<dbReference type="MGI" id="MGI:2444505">
    <property type="gene designation" value="Marf1"/>
</dbReference>
<dbReference type="VEuPathDB" id="HostDB:ENSMUSG00000060657"/>
<dbReference type="eggNOG" id="ENOG502QUYZ">
    <property type="taxonomic scope" value="Eukaryota"/>
</dbReference>
<dbReference type="GeneTree" id="ENSGT00390000002393"/>
<dbReference type="HOGENOM" id="CLU_002701_0_0_1"/>
<dbReference type="InParanoid" id="Q8BJ34"/>
<dbReference type="OMA" id="TMFQVSY"/>
<dbReference type="OrthoDB" id="40917at9989"/>
<dbReference type="TreeFam" id="TF329117"/>
<dbReference type="BioGRID-ORCS" id="223989">
    <property type="hits" value="4 hits in 113 CRISPR screens"/>
</dbReference>
<dbReference type="ChiTaRS" id="Marf1">
    <property type="organism name" value="mouse"/>
</dbReference>
<dbReference type="PRO" id="PR:Q8BJ34"/>
<dbReference type="Proteomes" id="UP000000589">
    <property type="component" value="Chromosome 16"/>
</dbReference>
<dbReference type="RNAct" id="Q8BJ34">
    <property type="molecule type" value="protein"/>
</dbReference>
<dbReference type="Bgee" id="ENSMUSG00000060657">
    <property type="expression patterns" value="Expressed in dorsal pancreas and 229 other cell types or tissues"/>
</dbReference>
<dbReference type="ExpressionAtlas" id="Q8BJ34">
    <property type="expression patterns" value="baseline and differential"/>
</dbReference>
<dbReference type="GO" id="GO:0005794">
    <property type="term" value="C:Golgi apparatus"/>
    <property type="evidence" value="ECO:0007669"/>
    <property type="project" value="Ensembl"/>
</dbReference>
<dbReference type="GO" id="GO:0005777">
    <property type="term" value="C:peroxisome"/>
    <property type="evidence" value="ECO:0007669"/>
    <property type="project" value="UniProtKB-SubCell"/>
</dbReference>
<dbReference type="GO" id="GO:0003723">
    <property type="term" value="F:RNA binding"/>
    <property type="evidence" value="ECO:0007669"/>
    <property type="project" value="UniProtKB-KW"/>
</dbReference>
<dbReference type="GO" id="GO:0004540">
    <property type="term" value="F:RNA nuclease activity"/>
    <property type="evidence" value="ECO:0007669"/>
    <property type="project" value="InterPro"/>
</dbReference>
<dbReference type="GO" id="GO:0006302">
    <property type="term" value="P:double-strand break repair"/>
    <property type="evidence" value="ECO:0000315"/>
    <property type="project" value="MGI"/>
</dbReference>
<dbReference type="GO" id="GO:0007143">
    <property type="term" value="P:female meiotic nuclear division"/>
    <property type="evidence" value="ECO:0000315"/>
    <property type="project" value="UniProtKB"/>
</dbReference>
<dbReference type="GO" id="GO:0048477">
    <property type="term" value="P:oogenesis"/>
    <property type="evidence" value="ECO:0000315"/>
    <property type="project" value="UniProtKB"/>
</dbReference>
<dbReference type="GO" id="GO:0010468">
    <property type="term" value="P:regulation of gene expression"/>
    <property type="evidence" value="ECO:0000315"/>
    <property type="project" value="UniProtKB"/>
</dbReference>
<dbReference type="CDD" id="cd09978">
    <property type="entry name" value="LOTUS_2_Limkain_b1"/>
    <property type="match status" value="1"/>
</dbReference>
<dbReference type="CDD" id="cd09979">
    <property type="entry name" value="LOTUS_3_Limkain_b1"/>
    <property type="match status" value="1"/>
</dbReference>
<dbReference type="CDD" id="cd09980">
    <property type="entry name" value="LOTUS_4_Limkain_b1"/>
    <property type="match status" value="1"/>
</dbReference>
<dbReference type="CDD" id="cd09981">
    <property type="entry name" value="LOTUS_5_Limkain_b1"/>
    <property type="match status" value="1"/>
</dbReference>
<dbReference type="CDD" id="cd09983">
    <property type="entry name" value="LOTUS_7_Limkain_b1"/>
    <property type="match status" value="1"/>
</dbReference>
<dbReference type="CDD" id="cd09984">
    <property type="entry name" value="LOTUS_8_Limkain_b1"/>
    <property type="match status" value="1"/>
</dbReference>
<dbReference type="CDD" id="cd10910">
    <property type="entry name" value="PIN_limkain_b1_N_like"/>
    <property type="match status" value="1"/>
</dbReference>
<dbReference type="CDD" id="cd12255">
    <property type="entry name" value="RRM1_LKAP"/>
    <property type="match status" value="1"/>
</dbReference>
<dbReference type="CDD" id="cd12256">
    <property type="entry name" value="RRM2_LKAP"/>
    <property type="match status" value="1"/>
</dbReference>
<dbReference type="FunFam" id="3.30.420.610:FF:000001">
    <property type="entry name" value="Meiosis regulator and mRNA stability factor 1"/>
    <property type="match status" value="2"/>
</dbReference>
<dbReference type="FunFam" id="3.30.420.610:FF:000004">
    <property type="entry name" value="Meiosis regulator and mRNA stability factor 1"/>
    <property type="match status" value="1"/>
</dbReference>
<dbReference type="FunFam" id="3.40.50.1010:FF:000008">
    <property type="entry name" value="Meiosis regulator and mRNA stability factor 1"/>
    <property type="match status" value="1"/>
</dbReference>
<dbReference type="Gene3D" id="3.30.70.330">
    <property type="match status" value="2"/>
</dbReference>
<dbReference type="Gene3D" id="3.40.50.1010">
    <property type="entry name" value="5'-nuclease"/>
    <property type="match status" value="1"/>
</dbReference>
<dbReference type="Gene3D" id="3.30.420.610">
    <property type="entry name" value="LOTUS domain-like"/>
    <property type="match status" value="6"/>
</dbReference>
<dbReference type="InterPro" id="IPR041966">
    <property type="entry name" value="LOTUS-like"/>
</dbReference>
<dbReference type="InterPro" id="IPR024768">
    <property type="entry name" value="Marf1"/>
</dbReference>
<dbReference type="InterPro" id="IPR045602">
    <property type="entry name" value="MARF1_LOTUS"/>
</dbReference>
<dbReference type="InterPro" id="IPR034189">
    <property type="entry name" value="MARF1_RRM1"/>
</dbReference>
<dbReference type="InterPro" id="IPR034191">
    <property type="entry name" value="MARF1_RRM2"/>
</dbReference>
<dbReference type="InterPro" id="IPR012677">
    <property type="entry name" value="Nucleotide-bd_a/b_plait_sf"/>
</dbReference>
<dbReference type="InterPro" id="IPR021139">
    <property type="entry name" value="NYN"/>
</dbReference>
<dbReference type="InterPro" id="IPR025605">
    <property type="entry name" value="OST-HTH/LOTUS_dom"/>
</dbReference>
<dbReference type="InterPro" id="IPR035979">
    <property type="entry name" value="RBD_domain_sf"/>
</dbReference>
<dbReference type="InterPro" id="IPR000504">
    <property type="entry name" value="RRM_dom"/>
</dbReference>
<dbReference type="PANTHER" id="PTHR14379">
    <property type="entry name" value="LIMKAIN B LKAP"/>
    <property type="match status" value="1"/>
</dbReference>
<dbReference type="PANTHER" id="PTHR14379:SF3">
    <property type="entry name" value="MEIOSIS REGULATOR AND MRNA STABILITY FACTOR 1"/>
    <property type="match status" value="1"/>
</dbReference>
<dbReference type="Pfam" id="PF19687">
    <property type="entry name" value="MARF1_LOTUS"/>
    <property type="match status" value="1"/>
</dbReference>
<dbReference type="Pfam" id="PF01936">
    <property type="entry name" value="NYN"/>
    <property type="match status" value="1"/>
</dbReference>
<dbReference type="Pfam" id="PF12872">
    <property type="entry name" value="OST-HTH"/>
    <property type="match status" value="5"/>
</dbReference>
<dbReference type="Pfam" id="PF11608">
    <property type="entry name" value="RRM_MARF1"/>
    <property type="match status" value="1"/>
</dbReference>
<dbReference type="SMART" id="SM00360">
    <property type="entry name" value="RRM"/>
    <property type="match status" value="2"/>
</dbReference>
<dbReference type="SUPFAM" id="SSF54928">
    <property type="entry name" value="RNA-binding domain, RBD"/>
    <property type="match status" value="2"/>
</dbReference>
<dbReference type="PROSITE" id="PS51644">
    <property type="entry name" value="HTH_OST"/>
    <property type="match status" value="8"/>
</dbReference>
<dbReference type="PROSITE" id="PS50102">
    <property type="entry name" value="RRM"/>
    <property type="match status" value="1"/>
</dbReference>
<name>MARF1_MOUSE</name>
<feature type="chain" id="PRO_0000276847" description="Meiosis regulator and mRNA stability factor 1">
    <location>
        <begin position="1"/>
        <end position="1730"/>
    </location>
</feature>
<feature type="domain" description="NYN">
    <location>
        <begin position="352"/>
        <end position="489"/>
    </location>
</feature>
<feature type="domain" description="RRM" evidence="3">
    <location>
        <begin position="781"/>
        <end position="860"/>
    </location>
</feature>
<feature type="domain" description="HTH OST-type 1" evidence="4">
    <location>
        <begin position="865"/>
        <end position="939"/>
    </location>
</feature>
<feature type="domain" description="HTH OST-type 2" evidence="4">
    <location>
        <begin position="993"/>
        <end position="1069"/>
    </location>
</feature>
<feature type="domain" description="HTH OST-type 3" evidence="4">
    <location>
        <begin position="1089"/>
        <end position="1163"/>
    </location>
</feature>
<feature type="domain" description="HTH OST-type 4" evidence="4">
    <location>
        <begin position="1165"/>
        <end position="1241"/>
    </location>
</feature>
<feature type="domain" description="HTH OST-type 5" evidence="4">
    <location>
        <begin position="1249"/>
        <end position="1324"/>
    </location>
</feature>
<feature type="domain" description="HTH OST-type 6" evidence="4">
    <location>
        <begin position="1325"/>
        <end position="1400"/>
    </location>
</feature>
<feature type="domain" description="HTH OST-type 7" evidence="4">
    <location>
        <begin position="1401"/>
        <end position="1475"/>
    </location>
</feature>
<feature type="domain" description="HTH OST-type 8" evidence="4">
    <location>
        <begin position="1476"/>
        <end position="1550"/>
    </location>
</feature>
<feature type="region of interest" description="Disordered" evidence="5">
    <location>
        <begin position="655"/>
        <end position="722"/>
    </location>
</feature>
<feature type="region of interest" description="Disordered" evidence="5">
    <location>
        <begin position="1667"/>
        <end position="1714"/>
    </location>
</feature>
<feature type="compositionally biased region" description="Basic and acidic residues" evidence="5">
    <location>
        <begin position="655"/>
        <end position="668"/>
    </location>
</feature>
<feature type="modified residue" description="Phosphoserine" evidence="2">
    <location>
        <position position="65"/>
    </location>
</feature>
<feature type="modified residue" description="Phosphotyrosine" evidence="13">
    <location>
        <position position="698"/>
    </location>
</feature>
<feature type="modified residue" description="Phosphoserine" evidence="2">
    <location>
        <position position="1081"/>
    </location>
</feature>
<feature type="modified residue" description="Phosphoserine" evidence="14">
    <location>
        <position position="1083"/>
    </location>
</feature>
<feature type="modified residue" description="Phosphoserine" evidence="14">
    <location>
        <position position="1684"/>
    </location>
</feature>
<feature type="splice variant" id="VSP_022991" description="In isoform 5." evidence="8">
    <location>
        <begin position="1"/>
        <end position="566"/>
    </location>
</feature>
<feature type="splice variant" id="VSP_022992" description="In isoform 2 and isoform 3." evidence="9 10">
    <location>
        <begin position="1"/>
        <end position="50"/>
    </location>
</feature>
<feature type="splice variant" id="VSP_022993" description="In isoform 2." evidence="9">
    <location>
        <begin position="97"/>
        <end position="275"/>
    </location>
</feature>
<feature type="splice variant" id="VSP_022994" description="In isoform 3." evidence="10">
    <original>PARNSIIDAAK</original>
    <variation>VCIFYSLSWGRRGLVLLNGS</variation>
    <location>
        <begin position="277"/>
        <end position="287"/>
    </location>
</feature>
<feature type="splice variant" id="VSP_022995" description="In isoform 3." evidence="10">
    <location>
        <position position="291"/>
    </location>
</feature>
<feature type="splice variant" id="VSP_022996" description="In isoform 3." evidence="10">
    <location>
        <begin position="409"/>
        <end position="448"/>
    </location>
</feature>
<feature type="splice variant" id="VSP_022997" description="In isoform 2, isoform 3 and isoform 6." evidence="9 10">
    <location>
        <position position="508"/>
    </location>
</feature>
<feature type="splice variant" id="VSP_022998" description="In isoform 5 and isoform 6." evidence="8">
    <original>P</original>
    <variation>PRSMSPNLLN</variation>
    <location>
        <position position="755"/>
    </location>
</feature>
<feature type="splice variant" id="VSP_022999" description="In isoform 2." evidence="9">
    <location>
        <begin position="757"/>
        <end position="1730"/>
    </location>
</feature>
<feature type="splice variant" id="VSP_023000" description="In isoform 5." evidence="8">
    <original>KSVELSP</original>
    <variation>TSVLLFG</variation>
    <location>
        <begin position="812"/>
        <end position="818"/>
    </location>
</feature>
<feature type="splice variant" id="VSP_023001" description="In isoform 5." evidence="8">
    <location>
        <begin position="819"/>
        <end position="1730"/>
    </location>
</feature>
<feature type="splice variant" id="VSP_023002" description="In isoform 4 and isoform 6." evidence="9">
    <location>
        <begin position="1591"/>
        <end position="1592"/>
    </location>
</feature>
<feature type="sequence conflict" description="In Ref. 3; AAH31575." evidence="11" ref="3">
    <original>S</original>
    <variation>T</variation>
    <location>
        <position position="664"/>
    </location>
</feature>
<feature type="strand" evidence="15">
    <location>
        <begin position="351"/>
        <end position="357"/>
    </location>
</feature>
<feature type="turn" evidence="15">
    <location>
        <begin position="358"/>
        <end position="360"/>
    </location>
</feature>
<feature type="helix" evidence="15">
    <location>
        <begin position="369"/>
        <end position="380"/>
    </location>
</feature>
<feature type="strand" evidence="15">
    <location>
        <begin position="385"/>
        <end position="393"/>
    </location>
</feature>
<feature type="helix" evidence="15">
    <location>
        <begin position="395"/>
        <end position="397"/>
    </location>
</feature>
<feature type="helix" evidence="15">
    <location>
        <begin position="400"/>
        <end position="408"/>
    </location>
</feature>
<feature type="strand" evidence="15">
    <location>
        <begin position="412"/>
        <end position="415"/>
    </location>
</feature>
<feature type="helix" evidence="15">
    <location>
        <begin position="423"/>
        <end position="438"/>
    </location>
</feature>
<feature type="strand" evidence="15">
    <location>
        <begin position="444"/>
        <end position="448"/>
    </location>
</feature>
<feature type="helix" evidence="15">
    <location>
        <begin position="452"/>
        <end position="454"/>
    </location>
</feature>
<feature type="helix" evidence="15">
    <location>
        <begin position="455"/>
        <end position="463"/>
    </location>
</feature>
<feature type="strand" evidence="15">
    <location>
        <begin position="468"/>
        <end position="473"/>
    </location>
</feature>
<feature type="helix" evidence="15">
    <location>
        <begin position="479"/>
        <end position="482"/>
    </location>
</feature>
<feature type="strand" evidence="15">
    <location>
        <begin position="486"/>
        <end position="490"/>
    </location>
</feature>
<feature type="helix" evidence="15">
    <location>
        <begin position="491"/>
        <end position="494"/>
    </location>
</feature>
<feature type="helix" evidence="16">
    <location>
        <begin position="861"/>
        <end position="878"/>
    </location>
</feature>
<feature type="helix" evidence="16">
    <location>
        <begin position="881"/>
        <end position="883"/>
    </location>
</feature>
<feature type="strand" evidence="16">
    <location>
        <begin position="884"/>
        <end position="886"/>
    </location>
</feature>
<feature type="helix" evidence="16">
    <location>
        <begin position="887"/>
        <end position="898"/>
    </location>
</feature>
<feature type="helix" evidence="16">
    <location>
        <begin position="904"/>
        <end position="907"/>
    </location>
</feature>
<feature type="turn" evidence="16">
    <location>
        <begin position="911"/>
        <end position="913"/>
    </location>
</feature>
<feature type="strand" evidence="16">
    <location>
        <begin position="914"/>
        <end position="917"/>
    </location>
</feature>
<feature type="strand" evidence="16">
    <location>
        <begin position="924"/>
        <end position="927"/>
    </location>
</feature>
<feature type="helix" evidence="16">
    <location>
        <begin position="929"/>
        <end position="931"/>
    </location>
</feature>
<sequence>MEGKGTENPCSRTLGWFHQDNDAKPWLWKFSGCFSRPEQTLPLSSQTKEYMENKKAAVELKDIPSPLHVGSKFFPAVPLPDIRSLQQPKVQLSAIPKVSCCAHCPNEPSTSPMRFGGGSGSSGGSGSLIHTGSLLDSPSTGTVTCQVGSGFAFQSVSSLQNASTRNNLVGLSSDFPSMCVESNLPSCKHLSCCGKLHFQSCHSNVHKLHQFQNLQGCASAGYFPCSDFPSGAPGHLEERLSHSELTPHLCTNSLHLNVAPPVCLKGSLYCEDCLNKPARNSIIDAAKIWPNIPPPSTQPAPPAIPVCNGCGTKGMEKETSLLLATSLGKTASKFGSPEVAVTGQVLETLPPIGVFWDIENCSVPSGRSATTVVQRIREKFFRGHREAEFICVCDISKENKEVIQELNNCQVTVAHINATAKNAADDKLRQSLRRFANTHTAPATVVLVSTDVNFALELSDLRHRHGFHIILVHKNQASEALLHHANQLIRFEEFISDLPPRLPLKIPQCHTLLYVYNLPANKDGKSISNRLRRLSDNCGGKVLSITGCSAILRFINQDSAERAQKRMENEDVFGNRIIVSFTPKHREFFEAKSSNAIADKVKSPKKVKNTKLCLIKDTSEQSPSVKAMPGKVLQANSGSATKTTNIKSLQELCRMESKSGNRNSDHQQGHGRLAALPNSGPTASVPIVKNTGVTEPLYRSSQKKENPSSQSTVNSPVEKKKREETVFQVSYPSAFSKLIASRQVSPLLTSQSWSPRASPLAFNIANPSSGADCPDPFANGVDIQVSNVDYRLSRKELQQLLQEAFSKHGQVKSVELSPHTDYQLKAIVQMRNLHEAICAVNSLHRHKIGSKKILVSLSTGAANKSLSLLSTETMSILQDAPACCLPLFKFIDIYEKKYGHKLNVSDLYKLTDTIAIREQGNGRLVCLLPSNQARQSPLGSSQSHDGSSSNCSPVLFEELEYHEPVCKQHCSNKDFSELVFDPDSYKIPFVVLSLKVFAPQVHSLLQTHQGTVPLLSFPDCYAAEFGDLEITQDSHKGVPLEHFITCIPGVNIATAQNGVKVVKWIHNKPPPPNTDPWLLRSKSPVRNPQLIQFSREVIDLLKTQPSCILPVSNFIPSYHHHFGKQCRVSDYGYSKLIELLEAVPHVLQILGMGSKRLMTLTHRAQVKRFTQDLLKLLKSQASKQVIVRDFSQAYHWCFSKDWDVTEYGVCDLIDIISEIPDTTICLSQQDDDMVICIRKRERTQDEIERTKQFSKDVVDLLRHQPHFRMPFNKFIPSYHHHFGRQCKLAYYGFTKLLELLEAIPEILQVLECGEEKILTLTEVERFKALAAQFVKLLRSQKGNCLMMTDLFTEYAKTFGYTFRLQDYDVSSVSALTQKLCHVVKVADMESGKQIQLINRKSLRSLTAQLLVLLMSWEGDAYLPVDELRRHYETTHSTPLNPCEYGFMTLTELLKSLPYLVEVCTNDKAEEYVKLTSLYLFAKNVRSLLHTYHYQQIFLHEFSMAYNKYVGETLQPKTYGYSSVEELLGAIPQVVWIKGHGHKRIVVLKNDMKNRLSSFDLFSVNHEDQPAVSRQILAVPESHLASELQLRTGTGPSQMEQELLHLASSSPVDLLCAPVPSCLPSPQLRPDPVILKPADLIQFEEHPQEPLGVLVLNQEEKSEVPLPVQKGNLSCDSSPSSPAASPAPPGPSSEAPRPLFSKDAVESPAKKQPKNRVKLAANFSFAPVTKL</sequence>